<evidence type="ECO:0000250" key="1"/>
<evidence type="ECO:0000255" key="2">
    <source>
        <dbReference type="PROSITE-ProRule" id="PRU00176"/>
    </source>
</evidence>
<evidence type="ECO:0000256" key="3">
    <source>
        <dbReference type="SAM" id="MobiDB-lite"/>
    </source>
</evidence>
<evidence type="ECO:0000305" key="4"/>
<keyword id="KW-0539">Nucleus</keyword>
<keyword id="KW-1185">Reference proteome</keyword>
<keyword id="KW-0690">Ribosome biogenesis</keyword>
<keyword id="KW-0694">RNA-binding</keyword>
<keyword id="KW-0698">rRNA processing</keyword>
<accession>Q2GZQ4</accession>
<comment type="function">
    <text evidence="1">Involved in the small subunit (SSU) processome assembly and function, and in the 18S rRNA synthesis. Required for the early cleavages at sites A0, A1 and A2 (By similarity).</text>
</comment>
<comment type="subcellular location">
    <subcellularLocation>
        <location evidence="1">Nucleus</location>
        <location evidence="1">Nucleolus</location>
    </subcellularLocation>
</comment>
<comment type="similarity">
    <text evidence="4">Belongs to the ESF2/ABP1 family.</text>
</comment>
<comment type="sequence caution" evidence="4">
    <conflict type="erroneous gene model prediction">
        <sequence resource="EMBL-CDS" id="EAQ88373"/>
    </conflict>
</comment>
<comment type="sequence caution" evidence="4">
    <conflict type="frameshift">
        <sequence resource="EMBL-CDS" id="EAQ88373"/>
    </conflict>
</comment>
<dbReference type="EMBL" id="CH408032">
    <property type="protein sequence ID" value="EAQ88373.1"/>
    <property type="status" value="ALT_SEQ"/>
    <property type="molecule type" value="Genomic_DNA"/>
</dbReference>
<dbReference type="RefSeq" id="XP_001224206.1">
    <property type="nucleotide sequence ID" value="XM_001224205.1"/>
</dbReference>
<dbReference type="FunCoup" id="Q2GZQ4">
    <property type="interactions" value="825"/>
</dbReference>
<dbReference type="STRING" id="306901.Q2GZQ4"/>
<dbReference type="GeneID" id="4392017"/>
<dbReference type="VEuPathDB" id="FungiDB:CHGG_04992"/>
<dbReference type="eggNOG" id="KOG3152">
    <property type="taxonomic scope" value="Eukaryota"/>
</dbReference>
<dbReference type="HOGENOM" id="CLU_054086_0_1_1"/>
<dbReference type="InParanoid" id="Q2GZQ4"/>
<dbReference type="OrthoDB" id="287393at2759"/>
<dbReference type="Proteomes" id="UP000001056">
    <property type="component" value="Unassembled WGS sequence"/>
</dbReference>
<dbReference type="GO" id="GO:0005730">
    <property type="term" value="C:nucleolus"/>
    <property type="evidence" value="ECO:0007669"/>
    <property type="project" value="UniProtKB-SubCell"/>
</dbReference>
<dbReference type="GO" id="GO:0003723">
    <property type="term" value="F:RNA binding"/>
    <property type="evidence" value="ECO:0007669"/>
    <property type="project" value="UniProtKB-KW"/>
</dbReference>
<dbReference type="GO" id="GO:0000480">
    <property type="term" value="P:endonucleolytic cleavage in 5'-ETS of tricistronic rRNA transcript (SSU-rRNA, 5.8S rRNA, LSU-rRNA)"/>
    <property type="evidence" value="ECO:0007669"/>
    <property type="project" value="TreeGrafter"/>
</dbReference>
<dbReference type="GO" id="GO:0000447">
    <property type="term" value="P:endonucleolytic cleavage in ITS1 to separate SSU-rRNA from 5.8S rRNA and LSU-rRNA from tricistronic rRNA transcript (SSU-rRNA, 5.8S rRNA, LSU-rRNA)"/>
    <property type="evidence" value="ECO:0007669"/>
    <property type="project" value="TreeGrafter"/>
</dbReference>
<dbReference type="GO" id="GO:0000472">
    <property type="term" value="P:endonucleolytic cleavage to generate mature 5'-end of SSU-rRNA from (SSU-rRNA, 5.8S rRNA, LSU-rRNA)"/>
    <property type="evidence" value="ECO:0007669"/>
    <property type="project" value="TreeGrafter"/>
</dbReference>
<dbReference type="GO" id="GO:0034462">
    <property type="term" value="P:small-subunit processome assembly"/>
    <property type="evidence" value="ECO:0007669"/>
    <property type="project" value="TreeGrafter"/>
</dbReference>
<dbReference type="CDD" id="cd12263">
    <property type="entry name" value="RRM_ABT1_like"/>
    <property type="match status" value="1"/>
</dbReference>
<dbReference type="FunFam" id="3.30.70.330:FF:001147">
    <property type="entry name" value="Pre-rRNA-processing protein esf-2"/>
    <property type="match status" value="1"/>
</dbReference>
<dbReference type="Gene3D" id="3.30.70.330">
    <property type="match status" value="1"/>
</dbReference>
<dbReference type="InterPro" id="IPR039119">
    <property type="entry name" value="ABT1/Esf2"/>
</dbReference>
<dbReference type="InterPro" id="IPR034353">
    <property type="entry name" value="ABT1/ESF2_RRM"/>
</dbReference>
<dbReference type="InterPro" id="IPR012677">
    <property type="entry name" value="Nucleotide-bd_a/b_plait_sf"/>
</dbReference>
<dbReference type="InterPro" id="IPR035979">
    <property type="entry name" value="RBD_domain_sf"/>
</dbReference>
<dbReference type="InterPro" id="IPR000504">
    <property type="entry name" value="RRM_dom"/>
</dbReference>
<dbReference type="PANTHER" id="PTHR12311">
    <property type="entry name" value="ACTIVATOR OF BASAL TRANSCRIPTION 1"/>
    <property type="match status" value="1"/>
</dbReference>
<dbReference type="PANTHER" id="PTHR12311:SF7">
    <property type="entry name" value="ACTIVATOR OF BASAL TRANSCRIPTION 1"/>
    <property type="match status" value="1"/>
</dbReference>
<dbReference type="Pfam" id="PF00076">
    <property type="entry name" value="RRM_1"/>
    <property type="match status" value="1"/>
</dbReference>
<dbReference type="SMART" id="SM00360">
    <property type="entry name" value="RRM"/>
    <property type="match status" value="1"/>
</dbReference>
<dbReference type="SUPFAM" id="SSF54928">
    <property type="entry name" value="RNA-binding domain, RBD"/>
    <property type="match status" value="1"/>
</dbReference>
<dbReference type="PROSITE" id="PS50102">
    <property type="entry name" value="RRM"/>
    <property type="match status" value="1"/>
</dbReference>
<feature type="chain" id="PRO_0000285368" description="Pre-rRNA-processing protein ESF2">
    <location>
        <begin position="1"/>
        <end position="332"/>
    </location>
</feature>
<feature type="domain" description="RRM" evidence="2">
    <location>
        <begin position="121"/>
        <end position="211"/>
    </location>
</feature>
<feature type="region of interest" description="Disordered" evidence="3">
    <location>
        <begin position="1"/>
        <end position="100"/>
    </location>
</feature>
<feature type="region of interest" description="Disordered" evidence="3">
    <location>
        <begin position="269"/>
        <end position="302"/>
    </location>
</feature>
<feature type="compositionally biased region" description="Basic and acidic residues" evidence="3">
    <location>
        <begin position="18"/>
        <end position="31"/>
    </location>
</feature>
<feature type="compositionally biased region" description="Acidic residues" evidence="3">
    <location>
        <begin position="43"/>
        <end position="59"/>
    </location>
</feature>
<feature type="compositionally biased region" description="Basic and acidic residues" evidence="3">
    <location>
        <begin position="85"/>
        <end position="94"/>
    </location>
</feature>
<feature type="compositionally biased region" description="Basic and acidic residues" evidence="3">
    <location>
        <begin position="292"/>
        <end position="302"/>
    </location>
</feature>
<sequence length="332" mass="37197">MSTDKRNQFLDAGDSEDDAGHGYDSEEDLQKGGRSAKRRRVDDDDSDAEDVSDQEEEHGEDGATNLREGTADSEAARDDEEIAEEGPKDDKADLPAELPGVSKPLAKKNLVASEAAIKKSGVVYLSRIPPFMKPAKLRSLLEPYGKINRIFLTPEDPTEHTRRVRNGGNKKRSFTEGWVEFVKKKDAKKVCDLLNAQTIGGKKSSWYHDDVWALKYLNGFKWHHLTEQISAENAERTSRIRAEVAKTTRENKEFVRNVERAKVINGIQSKAAAKRKKTDDSEEAAGSGEAVGKTEGESAQDKRRTFKQILLAKKRKHEEQPAHVLRVLSKIF</sequence>
<name>ESF2_CHAGB</name>
<reference key="1">
    <citation type="journal article" date="2015" name="Genome Announc.">
        <title>Draft genome sequence of the cellulolytic fungus Chaetomium globosum.</title>
        <authorList>
            <person name="Cuomo C.A."/>
            <person name="Untereiner W.A."/>
            <person name="Ma L.-J."/>
            <person name="Grabherr M."/>
            <person name="Birren B.W."/>
        </authorList>
    </citation>
    <scope>NUCLEOTIDE SEQUENCE [LARGE SCALE GENOMIC DNA]</scope>
    <source>
        <strain>ATCC 6205 / CBS 148.51 / DSM 1962 / NBRC 6347 / NRRL 1970</strain>
    </source>
</reference>
<organism>
    <name type="scientific">Chaetomium globosum (strain ATCC 6205 / CBS 148.51 / DSM 1962 / NBRC 6347 / NRRL 1970)</name>
    <name type="common">Soil fungus</name>
    <dbReference type="NCBI Taxonomy" id="306901"/>
    <lineage>
        <taxon>Eukaryota</taxon>
        <taxon>Fungi</taxon>
        <taxon>Dikarya</taxon>
        <taxon>Ascomycota</taxon>
        <taxon>Pezizomycotina</taxon>
        <taxon>Sordariomycetes</taxon>
        <taxon>Sordariomycetidae</taxon>
        <taxon>Sordariales</taxon>
        <taxon>Chaetomiaceae</taxon>
        <taxon>Chaetomium</taxon>
    </lineage>
</organism>
<gene>
    <name type="primary">ESF2</name>
    <name type="ORF">CHGG_04992</name>
</gene>
<proteinExistence type="inferred from homology"/>
<protein>
    <recommendedName>
        <fullName>Pre-rRNA-processing protein ESF2</fullName>
    </recommendedName>
    <alternativeName>
        <fullName>18S rRNA factor 2</fullName>
    </alternativeName>
</protein>